<comment type="function">
    <text evidence="1">The UvrABC repair system catalyzes the recognition and processing of DNA lesions. UvrA is an ATPase and a DNA-binding protein. A damage recognition complex composed of 2 UvrA and 2 UvrB subunits scans DNA for abnormalities. When the presence of a lesion has been verified by UvrB, the UvrA molecules dissociate.</text>
</comment>
<comment type="subunit">
    <text evidence="1">Forms a heterotetramer with UvrB during the search for lesions.</text>
</comment>
<comment type="subcellular location">
    <subcellularLocation>
        <location evidence="1">Cytoplasm</location>
    </subcellularLocation>
</comment>
<comment type="similarity">
    <text evidence="1">Belongs to the ABC transporter superfamily. UvrA family.</text>
</comment>
<feature type="chain" id="PRO_0000093074" description="UvrABC system protein A">
    <location>
        <begin position="1"/>
        <end position="958"/>
    </location>
</feature>
<feature type="domain" description="ABC transporter 1" evidence="1">
    <location>
        <begin position="1"/>
        <end position="232"/>
    </location>
</feature>
<feature type="domain" description="ABC transporter 2" evidence="1">
    <location>
        <begin position="315"/>
        <end position="593"/>
    </location>
</feature>
<feature type="domain" description="ABC transporter 3">
    <location>
        <begin position="604"/>
        <end position="935"/>
    </location>
</feature>
<feature type="zinc finger region" description="C4-type" evidence="1">
    <location>
        <begin position="252"/>
        <end position="279"/>
    </location>
</feature>
<feature type="zinc finger region" description="C4-type" evidence="1">
    <location>
        <begin position="738"/>
        <end position="764"/>
    </location>
</feature>
<feature type="binding site" evidence="1">
    <location>
        <begin position="33"/>
        <end position="40"/>
    </location>
    <ligand>
        <name>ATP</name>
        <dbReference type="ChEBI" id="CHEBI:30616"/>
        <label>1</label>
    </ligand>
</feature>
<feature type="binding site" evidence="1">
    <location>
        <begin position="639"/>
        <end position="646"/>
    </location>
    <ligand>
        <name>ATP</name>
        <dbReference type="ChEBI" id="CHEBI:30616"/>
        <label>2</label>
    </ligand>
</feature>
<accession>Q8ENJ6</accession>
<evidence type="ECO:0000255" key="1">
    <source>
        <dbReference type="HAMAP-Rule" id="MF_00205"/>
    </source>
</evidence>
<organism>
    <name type="scientific">Oceanobacillus iheyensis (strain DSM 14371 / CIP 107618 / JCM 11309 / KCTC 3954 / HTE831)</name>
    <dbReference type="NCBI Taxonomy" id="221109"/>
    <lineage>
        <taxon>Bacteria</taxon>
        <taxon>Bacillati</taxon>
        <taxon>Bacillota</taxon>
        <taxon>Bacilli</taxon>
        <taxon>Bacillales</taxon>
        <taxon>Bacillaceae</taxon>
        <taxon>Oceanobacillus</taxon>
    </lineage>
</organism>
<proteinExistence type="inferred from homology"/>
<sequence>MQSKSIKIQGARTHNLKDIDIDIPKNKLVVLTGLSGSGKSSLAFDTIYAEGQRRYVESLSSYARQFLGQMDKPDVDVIEGLSPAISIDQKTTSKNPRSTVGTVTEIYDYLRLLYARVGRPTCPNHGIEISSQTVQQMVDRILEYPERTKLQILAPVVSGRKGEHVKILENLKQEGYVRIRVDNEMREVTDDIQLEKNKKHSIEVVIDRIVVKDGVASRLSDSIETALKLGEGNIIVDVIGEEELTFSENHACPICGFSIGELEPRLFSFNSPFGACPSCDGLGTKLEVDIDLVIPDWEKTLNENAIAPWEPISSQYYPQLLKSVCNHFGIDMDIPVKEIPQQQMDIILQGSGKEKIKFEYENDFGSIRRSEAPFEGVLKNVARRYRETSSDFIRETLEKYMAQKNCPTCKGHRLKKEALAVLINGKHISNVTDYSIVESIQLFQQLDLTEKEQQIARLILKEIDNRLEFLNNVGLDYLTLSRTAGTLSGGEAQRIRLATQIGSALTGVLYVLDEPSIGLHQRDNDRLIDTLKRMRDLDNTLIVVEHDEDTMLAADWLVDIGPGAGEHGGEIVASDTPQNVMKNEQSLTGKYLSGKEFIPLPTKRRKPNKRKIEVMGASENNLKNVSAKIPIGLMTVVTGVSGSGKSTLVNEIVYKSLAKSLYKGKVKPGKHKKIKGIEHIDKVIDIDQSPIGRTPRSNPATYTGVFDDIRDVFAQTNEAKVRGYKKGRFSFNVKGGRCEACRGDGILKIEMHFLPDVYVPCEVCHGARYNRETLEVKYKGKNISEVLELRIEEALEFFSAIPKIKRKLQTVYDVGLGYIRLGQPATTLSGGEAQRVKLASELHKRSTGKSFYILDEPTTGLHVDDIRRLLSVLQRIADNGDSVLIIEHNLDVIKSADHIIDLGPEGGDRGGQIIATGTPEQIAEQQDVSYTGKYLSPVLDRDKQRMEETLEAKTVSRS</sequence>
<protein>
    <recommendedName>
        <fullName evidence="1">UvrABC system protein A</fullName>
        <shortName evidence="1">UvrA protein</shortName>
    </recommendedName>
    <alternativeName>
        <fullName evidence="1">Excinuclease ABC subunit A</fullName>
    </alternativeName>
</protein>
<gene>
    <name evidence="1" type="primary">uvrA</name>
    <name type="ordered locus">OB2487</name>
</gene>
<reference key="1">
    <citation type="journal article" date="2002" name="Nucleic Acids Res.">
        <title>Genome sequence of Oceanobacillus iheyensis isolated from the Iheya Ridge and its unexpected adaptive capabilities to extreme environments.</title>
        <authorList>
            <person name="Takami H."/>
            <person name="Takaki Y."/>
            <person name="Uchiyama I."/>
        </authorList>
    </citation>
    <scope>NUCLEOTIDE SEQUENCE [LARGE SCALE GENOMIC DNA]</scope>
    <source>
        <strain>DSM 14371 / CIP 107618 / JCM 11309 / KCTC 3954 / HTE831</strain>
    </source>
</reference>
<name>UVRA_OCEIH</name>
<dbReference type="EMBL" id="BA000028">
    <property type="protein sequence ID" value="BAC14443.1"/>
    <property type="molecule type" value="Genomic_DNA"/>
</dbReference>
<dbReference type="RefSeq" id="WP_011066880.1">
    <property type="nucleotide sequence ID" value="NC_004193.1"/>
</dbReference>
<dbReference type="SMR" id="Q8ENJ6"/>
<dbReference type="STRING" id="221109.gene:10734739"/>
<dbReference type="KEGG" id="oih:OB2487"/>
<dbReference type="eggNOG" id="COG0178">
    <property type="taxonomic scope" value="Bacteria"/>
</dbReference>
<dbReference type="HOGENOM" id="CLU_001370_0_0_9"/>
<dbReference type="OrthoDB" id="9809851at2"/>
<dbReference type="PhylomeDB" id="Q8ENJ6"/>
<dbReference type="Proteomes" id="UP000000822">
    <property type="component" value="Chromosome"/>
</dbReference>
<dbReference type="GO" id="GO:0005737">
    <property type="term" value="C:cytoplasm"/>
    <property type="evidence" value="ECO:0007669"/>
    <property type="project" value="UniProtKB-SubCell"/>
</dbReference>
<dbReference type="GO" id="GO:0009380">
    <property type="term" value="C:excinuclease repair complex"/>
    <property type="evidence" value="ECO:0007669"/>
    <property type="project" value="InterPro"/>
</dbReference>
<dbReference type="GO" id="GO:0005524">
    <property type="term" value="F:ATP binding"/>
    <property type="evidence" value="ECO:0007669"/>
    <property type="project" value="UniProtKB-UniRule"/>
</dbReference>
<dbReference type="GO" id="GO:0016887">
    <property type="term" value="F:ATP hydrolysis activity"/>
    <property type="evidence" value="ECO:0007669"/>
    <property type="project" value="InterPro"/>
</dbReference>
<dbReference type="GO" id="GO:0003677">
    <property type="term" value="F:DNA binding"/>
    <property type="evidence" value="ECO:0007669"/>
    <property type="project" value="UniProtKB-UniRule"/>
</dbReference>
<dbReference type="GO" id="GO:0009381">
    <property type="term" value="F:excinuclease ABC activity"/>
    <property type="evidence" value="ECO:0007669"/>
    <property type="project" value="UniProtKB-UniRule"/>
</dbReference>
<dbReference type="GO" id="GO:0008270">
    <property type="term" value="F:zinc ion binding"/>
    <property type="evidence" value="ECO:0007669"/>
    <property type="project" value="UniProtKB-UniRule"/>
</dbReference>
<dbReference type="GO" id="GO:0006289">
    <property type="term" value="P:nucleotide-excision repair"/>
    <property type="evidence" value="ECO:0007669"/>
    <property type="project" value="UniProtKB-UniRule"/>
</dbReference>
<dbReference type="GO" id="GO:0009432">
    <property type="term" value="P:SOS response"/>
    <property type="evidence" value="ECO:0007669"/>
    <property type="project" value="UniProtKB-UniRule"/>
</dbReference>
<dbReference type="CDD" id="cd03270">
    <property type="entry name" value="ABC_UvrA_I"/>
    <property type="match status" value="1"/>
</dbReference>
<dbReference type="CDD" id="cd03271">
    <property type="entry name" value="ABC_UvrA_II"/>
    <property type="match status" value="1"/>
</dbReference>
<dbReference type="FunFam" id="1.20.1580.10:FF:000002">
    <property type="entry name" value="UvrABC system protein A"/>
    <property type="match status" value="1"/>
</dbReference>
<dbReference type="FunFam" id="3.40.50.300:FF:000028">
    <property type="entry name" value="UvrABC system protein A"/>
    <property type="match status" value="1"/>
</dbReference>
<dbReference type="Gene3D" id="1.10.8.280">
    <property type="entry name" value="ABC transporter ATPase domain-like"/>
    <property type="match status" value="1"/>
</dbReference>
<dbReference type="Gene3D" id="1.20.1580.10">
    <property type="entry name" value="ABC transporter ATPase like domain"/>
    <property type="match status" value="2"/>
</dbReference>
<dbReference type="Gene3D" id="3.30.1490.20">
    <property type="entry name" value="ATP-grasp fold, A domain"/>
    <property type="match status" value="1"/>
</dbReference>
<dbReference type="Gene3D" id="3.40.50.300">
    <property type="entry name" value="P-loop containing nucleotide triphosphate hydrolases"/>
    <property type="match status" value="2"/>
</dbReference>
<dbReference type="HAMAP" id="MF_00205">
    <property type="entry name" value="UvrA"/>
    <property type="match status" value="1"/>
</dbReference>
<dbReference type="InterPro" id="IPR003439">
    <property type="entry name" value="ABC_transporter-like_ATP-bd"/>
</dbReference>
<dbReference type="InterPro" id="IPR017871">
    <property type="entry name" value="ABC_transporter-like_CS"/>
</dbReference>
<dbReference type="InterPro" id="IPR013815">
    <property type="entry name" value="ATP_grasp_subdomain_1"/>
</dbReference>
<dbReference type="InterPro" id="IPR027417">
    <property type="entry name" value="P-loop_NTPase"/>
</dbReference>
<dbReference type="InterPro" id="IPR004602">
    <property type="entry name" value="UvrA"/>
</dbReference>
<dbReference type="InterPro" id="IPR041552">
    <property type="entry name" value="UvrA_DNA-bd"/>
</dbReference>
<dbReference type="InterPro" id="IPR041102">
    <property type="entry name" value="UvrA_inter"/>
</dbReference>
<dbReference type="NCBIfam" id="NF001503">
    <property type="entry name" value="PRK00349.1"/>
    <property type="match status" value="1"/>
</dbReference>
<dbReference type="NCBIfam" id="TIGR00630">
    <property type="entry name" value="uvra"/>
    <property type="match status" value="1"/>
</dbReference>
<dbReference type="PANTHER" id="PTHR43152">
    <property type="entry name" value="UVRABC SYSTEM PROTEIN A"/>
    <property type="match status" value="1"/>
</dbReference>
<dbReference type="PANTHER" id="PTHR43152:SF3">
    <property type="entry name" value="UVRABC SYSTEM PROTEIN A"/>
    <property type="match status" value="1"/>
</dbReference>
<dbReference type="Pfam" id="PF17755">
    <property type="entry name" value="UvrA_DNA-bind"/>
    <property type="match status" value="1"/>
</dbReference>
<dbReference type="Pfam" id="PF17760">
    <property type="entry name" value="UvrA_inter"/>
    <property type="match status" value="1"/>
</dbReference>
<dbReference type="SUPFAM" id="SSF52540">
    <property type="entry name" value="P-loop containing nucleoside triphosphate hydrolases"/>
    <property type="match status" value="2"/>
</dbReference>
<dbReference type="PROSITE" id="PS00211">
    <property type="entry name" value="ABC_TRANSPORTER_1"/>
    <property type="match status" value="2"/>
</dbReference>
<dbReference type="PROSITE" id="PS50893">
    <property type="entry name" value="ABC_TRANSPORTER_2"/>
    <property type="match status" value="1"/>
</dbReference>
<keyword id="KW-0067">ATP-binding</keyword>
<keyword id="KW-0963">Cytoplasm</keyword>
<keyword id="KW-0227">DNA damage</keyword>
<keyword id="KW-0228">DNA excision</keyword>
<keyword id="KW-0234">DNA repair</keyword>
<keyword id="KW-0238">DNA-binding</keyword>
<keyword id="KW-0267">Excision nuclease</keyword>
<keyword id="KW-0479">Metal-binding</keyword>
<keyword id="KW-0547">Nucleotide-binding</keyword>
<keyword id="KW-1185">Reference proteome</keyword>
<keyword id="KW-0677">Repeat</keyword>
<keyword id="KW-0742">SOS response</keyword>
<keyword id="KW-0862">Zinc</keyword>
<keyword id="KW-0863">Zinc-finger</keyword>